<proteinExistence type="inferred from homology"/>
<evidence type="ECO:0000255" key="1">
    <source>
        <dbReference type="HAMAP-Rule" id="MF_00743"/>
    </source>
</evidence>
<keyword id="KW-0963">Cytoplasm</keyword>
<keyword id="KW-0456">Lyase</keyword>
<keyword id="KW-0816">Tricarboxylic acid cycle</keyword>
<name>FUMC_CHLCV</name>
<accession>Q822D5</accession>
<organism>
    <name type="scientific">Chlamydia caviae (strain ATCC VR-813 / DSM 19441 / 03DC25 / GPIC)</name>
    <name type="common">Chlamydophila caviae</name>
    <dbReference type="NCBI Taxonomy" id="227941"/>
    <lineage>
        <taxon>Bacteria</taxon>
        <taxon>Pseudomonadati</taxon>
        <taxon>Chlamydiota</taxon>
        <taxon>Chlamydiia</taxon>
        <taxon>Chlamydiales</taxon>
        <taxon>Chlamydiaceae</taxon>
        <taxon>Chlamydia/Chlamydophila group</taxon>
        <taxon>Chlamydia</taxon>
    </lineage>
</organism>
<feature type="chain" id="PRO_0000161266" description="Fumarate hydratase class II">
    <location>
        <begin position="1"/>
        <end position="460"/>
    </location>
</feature>
<feature type="active site" description="Proton donor/acceptor" evidence="1">
    <location>
        <position position="185"/>
    </location>
</feature>
<feature type="active site" evidence="1">
    <location>
        <position position="315"/>
    </location>
</feature>
<feature type="binding site" evidence="1">
    <location>
        <begin position="95"/>
        <end position="97"/>
    </location>
    <ligand>
        <name>substrate</name>
    </ligand>
</feature>
<feature type="binding site" description="in site B" evidence="1">
    <location>
        <begin position="126"/>
        <end position="129"/>
    </location>
    <ligand>
        <name>substrate</name>
    </ligand>
</feature>
<feature type="binding site" evidence="1">
    <location>
        <begin position="136"/>
        <end position="138"/>
    </location>
    <ligand>
        <name>substrate</name>
    </ligand>
</feature>
<feature type="binding site" evidence="1">
    <location>
        <position position="184"/>
    </location>
    <ligand>
        <name>substrate</name>
    </ligand>
</feature>
<feature type="binding site" evidence="1">
    <location>
        <position position="316"/>
    </location>
    <ligand>
        <name>substrate</name>
    </ligand>
</feature>
<feature type="binding site" evidence="1">
    <location>
        <begin position="321"/>
        <end position="323"/>
    </location>
    <ligand>
        <name>substrate</name>
    </ligand>
</feature>
<feature type="site" description="Important for catalytic activity" evidence="1">
    <location>
        <position position="328"/>
    </location>
</feature>
<protein>
    <recommendedName>
        <fullName evidence="1">Fumarate hydratase class II</fullName>
        <shortName evidence="1">Fumarase C</shortName>
        <ecNumber evidence="1">4.2.1.2</ecNumber>
    </recommendedName>
    <alternativeName>
        <fullName evidence="1">Aerobic fumarase</fullName>
    </alternativeName>
    <alternativeName>
        <fullName evidence="1">Iron-independent fumarase</fullName>
    </alternativeName>
</protein>
<comment type="function">
    <text evidence="1">Involved in the TCA cycle. Catalyzes the stereospecific interconversion of fumarate to L-malate.</text>
</comment>
<comment type="catalytic activity">
    <reaction evidence="1">
        <text>(S)-malate = fumarate + H2O</text>
        <dbReference type="Rhea" id="RHEA:12460"/>
        <dbReference type="ChEBI" id="CHEBI:15377"/>
        <dbReference type="ChEBI" id="CHEBI:15589"/>
        <dbReference type="ChEBI" id="CHEBI:29806"/>
        <dbReference type="EC" id="4.2.1.2"/>
    </reaction>
</comment>
<comment type="pathway">
    <text evidence="1">Carbohydrate metabolism; tricarboxylic acid cycle; (S)-malate from fumarate: step 1/1.</text>
</comment>
<comment type="subunit">
    <text evidence="1">Homotetramer.</text>
</comment>
<comment type="subcellular location">
    <subcellularLocation>
        <location evidence="1">Cytoplasm</location>
    </subcellularLocation>
</comment>
<comment type="miscellaneous">
    <text evidence="1">There are 2 substrate-binding sites: the catalytic A site, and the non-catalytic B site that may play a role in the transfer of substrate or product between the active site and the solvent. Alternatively, the B site may bind allosteric effectors.</text>
</comment>
<comment type="similarity">
    <text evidence="1">Belongs to the class-II fumarase/aspartase family. Fumarase subfamily.</text>
</comment>
<dbReference type="EC" id="4.2.1.2" evidence="1"/>
<dbReference type="EMBL" id="AE015925">
    <property type="protein sequence ID" value="AAP05489.1"/>
    <property type="molecule type" value="Genomic_DNA"/>
</dbReference>
<dbReference type="RefSeq" id="WP_011006703.1">
    <property type="nucleotide sequence ID" value="NC_003361.3"/>
</dbReference>
<dbReference type="SMR" id="Q822D5"/>
<dbReference type="STRING" id="227941.CCA_00748"/>
<dbReference type="KEGG" id="cca:CCA_00748"/>
<dbReference type="eggNOG" id="COG0114">
    <property type="taxonomic scope" value="Bacteria"/>
</dbReference>
<dbReference type="HOGENOM" id="CLU_021594_4_1_0"/>
<dbReference type="OrthoDB" id="9802809at2"/>
<dbReference type="UniPathway" id="UPA00223">
    <property type="reaction ID" value="UER01007"/>
</dbReference>
<dbReference type="Proteomes" id="UP000002193">
    <property type="component" value="Chromosome"/>
</dbReference>
<dbReference type="GO" id="GO:0005737">
    <property type="term" value="C:cytoplasm"/>
    <property type="evidence" value="ECO:0007669"/>
    <property type="project" value="UniProtKB-SubCell"/>
</dbReference>
<dbReference type="GO" id="GO:0004333">
    <property type="term" value="F:fumarate hydratase activity"/>
    <property type="evidence" value="ECO:0007669"/>
    <property type="project" value="UniProtKB-UniRule"/>
</dbReference>
<dbReference type="GO" id="GO:0006106">
    <property type="term" value="P:fumarate metabolic process"/>
    <property type="evidence" value="ECO:0007669"/>
    <property type="project" value="InterPro"/>
</dbReference>
<dbReference type="GO" id="GO:0006108">
    <property type="term" value="P:malate metabolic process"/>
    <property type="evidence" value="ECO:0007669"/>
    <property type="project" value="TreeGrafter"/>
</dbReference>
<dbReference type="GO" id="GO:0006099">
    <property type="term" value="P:tricarboxylic acid cycle"/>
    <property type="evidence" value="ECO:0007669"/>
    <property type="project" value="UniProtKB-UniRule"/>
</dbReference>
<dbReference type="CDD" id="cd01362">
    <property type="entry name" value="Fumarase_classII"/>
    <property type="match status" value="1"/>
</dbReference>
<dbReference type="FunFam" id="1.10.40.30:FF:000002">
    <property type="entry name" value="Fumarate hydratase class II"/>
    <property type="match status" value="1"/>
</dbReference>
<dbReference type="FunFam" id="1.10.275.10:FF:000001">
    <property type="entry name" value="Fumarate hydratase, mitochondrial"/>
    <property type="match status" value="1"/>
</dbReference>
<dbReference type="FunFam" id="1.20.200.10:FF:000001">
    <property type="entry name" value="Fumarate hydratase, mitochondrial"/>
    <property type="match status" value="1"/>
</dbReference>
<dbReference type="Gene3D" id="1.10.40.30">
    <property type="entry name" value="Fumarase/aspartase (C-terminal domain)"/>
    <property type="match status" value="1"/>
</dbReference>
<dbReference type="Gene3D" id="1.20.200.10">
    <property type="entry name" value="Fumarase/aspartase (Central domain)"/>
    <property type="match status" value="1"/>
</dbReference>
<dbReference type="Gene3D" id="1.10.275.10">
    <property type="entry name" value="Fumarase/aspartase (N-terminal domain)"/>
    <property type="match status" value="1"/>
</dbReference>
<dbReference type="HAMAP" id="MF_00743">
    <property type="entry name" value="FumaraseC"/>
    <property type="match status" value="1"/>
</dbReference>
<dbReference type="InterPro" id="IPR005677">
    <property type="entry name" value="Fum_hydII"/>
</dbReference>
<dbReference type="InterPro" id="IPR024083">
    <property type="entry name" value="Fumarase/histidase_N"/>
</dbReference>
<dbReference type="InterPro" id="IPR018951">
    <property type="entry name" value="Fumarase_C_C"/>
</dbReference>
<dbReference type="InterPro" id="IPR020557">
    <property type="entry name" value="Fumarate_lyase_CS"/>
</dbReference>
<dbReference type="InterPro" id="IPR000362">
    <property type="entry name" value="Fumarate_lyase_fam"/>
</dbReference>
<dbReference type="InterPro" id="IPR022761">
    <property type="entry name" value="Fumarate_lyase_N"/>
</dbReference>
<dbReference type="InterPro" id="IPR008948">
    <property type="entry name" value="L-Aspartase-like"/>
</dbReference>
<dbReference type="NCBIfam" id="TIGR00979">
    <property type="entry name" value="fumC_II"/>
    <property type="match status" value="1"/>
</dbReference>
<dbReference type="NCBIfam" id="NF008909">
    <property type="entry name" value="PRK12273.1"/>
    <property type="match status" value="1"/>
</dbReference>
<dbReference type="PANTHER" id="PTHR11444">
    <property type="entry name" value="ASPARTATEAMMONIA/ARGININOSUCCINATE/ADENYLOSUCCINATE LYASE"/>
    <property type="match status" value="1"/>
</dbReference>
<dbReference type="PANTHER" id="PTHR11444:SF1">
    <property type="entry name" value="FUMARATE HYDRATASE, MITOCHONDRIAL"/>
    <property type="match status" value="1"/>
</dbReference>
<dbReference type="Pfam" id="PF10415">
    <property type="entry name" value="FumaraseC_C"/>
    <property type="match status" value="1"/>
</dbReference>
<dbReference type="Pfam" id="PF00206">
    <property type="entry name" value="Lyase_1"/>
    <property type="match status" value="1"/>
</dbReference>
<dbReference type="PRINTS" id="PR00149">
    <property type="entry name" value="FUMRATELYASE"/>
</dbReference>
<dbReference type="SUPFAM" id="SSF48557">
    <property type="entry name" value="L-aspartase-like"/>
    <property type="match status" value="1"/>
</dbReference>
<dbReference type="PROSITE" id="PS00163">
    <property type="entry name" value="FUMARATE_LYASES"/>
    <property type="match status" value="1"/>
</dbReference>
<gene>
    <name evidence="1" type="primary">fumC</name>
    <name type="ordered locus">CCA_00748</name>
</gene>
<sequence length="460" mass="50259">MRQENDSLGIVEVPEDKLYGAQTARSQKYFSWAPEVMPKEVIRALVLIKQCAAKANHDLGFLDSKYCDMIVSAASEILEGGFEEHFPLKVWQTGSGTQSNMNVNEVIANLAIQRHGGVVGSKTPIHPNDHVNKSQSSNDVFPTAMHIAAVINLKKKLIPAMDHLQRALDAKVAEFRDCVKIGRTHLMDAVPMTLGQEFSGYSNQIRQSLERVAFSLTHMYELAIGGTAVGTGLNVPNGFIDKVIHYLRQETGEPFVAASNYFSALSNHDTLVNAHGVLATLACALTKIATDLSFLGSGPRCGLGELLFPENEPGSSIMPGKINPTQCEALQMVCAQVIGNNQAVIMGGSRGNFELNVMKPVIIYNFLQSVDILAGGMQAFADYFVSGLRVNKPRLKEYLDNSLMLVTALTPVLGYDKCSKMALKAFHDNINLKEACIQMGYLSAEEFDRLVVPESMVGKF</sequence>
<reference key="1">
    <citation type="journal article" date="2003" name="Nucleic Acids Res.">
        <title>Genome sequence of Chlamydophila caviae (Chlamydia psittaci GPIC): examining the role of niche-specific genes in the evolution of the Chlamydiaceae.</title>
        <authorList>
            <person name="Read T.D."/>
            <person name="Myers G.S.A."/>
            <person name="Brunham R.C."/>
            <person name="Nelson W.C."/>
            <person name="Paulsen I.T."/>
            <person name="Heidelberg J.F."/>
            <person name="Holtzapple E.K."/>
            <person name="Khouri H.M."/>
            <person name="Federova N.B."/>
            <person name="Carty H.A."/>
            <person name="Umayam L.A."/>
            <person name="Haft D.H."/>
            <person name="Peterson J.D."/>
            <person name="Beanan M.J."/>
            <person name="White O."/>
            <person name="Salzberg S.L."/>
            <person name="Hsia R.-C."/>
            <person name="McClarty G."/>
            <person name="Rank R.G."/>
            <person name="Bavoil P.M."/>
            <person name="Fraser C.M."/>
        </authorList>
    </citation>
    <scope>NUCLEOTIDE SEQUENCE [LARGE SCALE GENOMIC DNA]</scope>
    <source>
        <strain>ATCC VR-813 / DSM 19441 / 03DC25 / GPIC</strain>
    </source>
</reference>